<evidence type="ECO:0000255" key="1">
    <source>
        <dbReference type="HAMAP-Rule" id="MF_00104"/>
    </source>
</evidence>
<organism>
    <name type="scientific">Bacillus cereus (strain ZK / E33L)</name>
    <dbReference type="NCBI Taxonomy" id="288681"/>
    <lineage>
        <taxon>Bacteria</taxon>
        <taxon>Bacillati</taxon>
        <taxon>Bacillota</taxon>
        <taxon>Bacilli</taxon>
        <taxon>Bacillales</taxon>
        <taxon>Bacillaceae</taxon>
        <taxon>Bacillus</taxon>
        <taxon>Bacillus cereus group</taxon>
    </lineage>
</organism>
<protein>
    <recommendedName>
        <fullName evidence="1">Ribonuclease 3</fullName>
        <ecNumber evidence="1">3.1.26.3</ecNumber>
    </recommendedName>
    <alternativeName>
        <fullName evidence="1">Ribonuclease III</fullName>
        <shortName evidence="1">RNase III</shortName>
    </alternativeName>
</protein>
<accession>Q636H7</accession>
<gene>
    <name evidence="1" type="primary">rnc</name>
    <name type="ordered locus">BCE33L3608</name>
</gene>
<sequence length="245" mass="27949">MPYRKYREKKYETKYREAFKVFQEKIGITFTDEKLLIQAFTHSSYVNEHRKKPHEDNERLEFLGDAVLELTVSQYLFQKYPTMSEGELTKLRAAIVCEPSLVRFANELSFGGLVLLGKGEEMTGGRERPALLADVFEAFIGALYLDQGLETVWGFLKEIVYPKINEGAFSHVMDYKSQLQELIQRDGSGNIEYQILQEKGPAHNREFVSRVTLNNVALGLGSGKSKKEAEQQAAAEALKKLKEQL</sequence>
<feature type="chain" id="PRO_0000228492" description="Ribonuclease 3">
    <location>
        <begin position="1"/>
        <end position="245"/>
    </location>
</feature>
<feature type="domain" description="RNase III" evidence="1">
    <location>
        <begin position="19"/>
        <end position="148"/>
    </location>
</feature>
<feature type="domain" description="DRBM" evidence="1">
    <location>
        <begin position="174"/>
        <end position="243"/>
    </location>
</feature>
<feature type="active site" evidence="1">
    <location>
        <position position="65"/>
    </location>
</feature>
<feature type="active site" evidence="1">
    <location>
        <position position="137"/>
    </location>
</feature>
<feature type="binding site" evidence="1">
    <location>
        <position position="61"/>
    </location>
    <ligand>
        <name>Mg(2+)</name>
        <dbReference type="ChEBI" id="CHEBI:18420"/>
    </ligand>
</feature>
<feature type="binding site" evidence="1">
    <location>
        <position position="134"/>
    </location>
    <ligand>
        <name>Mg(2+)</name>
        <dbReference type="ChEBI" id="CHEBI:18420"/>
    </ligand>
</feature>
<feature type="binding site" evidence="1">
    <location>
        <position position="137"/>
    </location>
    <ligand>
        <name>Mg(2+)</name>
        <dbReference type="ChEBI" id="CHEBI:18420"/>
    </ligand>
</feature>
<proteinExistence type="inferred from homology"/>
<keyword id="KW-0963">Cytoplasm</keyword>
<keyword id="KW-0255">Endonuclease</keyword>
<keyword id="KW-0378">Hydrolase</keyword>
<keyword id="KW-0460">Magnesium</keyword>
<keyword id="KW-0479">Metal-binding</keyword>
<keyword id="KW-0507">mRNA processing</keyword>
<keyword id="KW-0540">Nuclease</keyword>
<keyword id="KW-0694">RNA-binding</keyword>
<keyword id="KW-0698">rRNA processing</keyword>
<keyword id="KW-0699">rRNA-binding</keyword>
<keyword id="KW-0819">tRNA processing</keyword>
<reference key="1">
    <citation type="journal article" date="2006" name="J. Bacteriol.">
        <title>Pathogenomic sequence analysis of Bacillus cereus and Bacillus thuringiensis isolates closely related to Bacillus anthracis.</title>
        <authorList>
            <person name="Han C.S."/>
            <person name="Xie G."/>
            <person name="Challacombe J.F."/>
            <person name="Altherr M.R."/>
            <person name="Bhotika S.S."/>
            <person name="Bruce D."/>
            <person name="Campbell C.S."/>
            <person name="Campbell M.L."/>
            <person name="Chen J."/>
            <person name="Chertkov O."/>
            <person name="Cleland C."/>
            <person name="Dimitrijevic M."/>
            <person name="Doggett N.A."/>
            <person name="Fawcett J.J."/>
            <person name="Glavina T."/>
            <person name="Goodwin L.A."/>
            <person name="Hill K.K."/>
            <person name="Hitchcock P."/>
            <person name="Jackson P.J."/>
            <person name="Keim P."/>
            <person name="Kewalramani A.R."/>
            <person name="Longmire J."/>
            <person name="Lucas S."/>
            <person name="Malfatti S."/>
            <person name="McMurry K."/>
            <person name="Meincke L.J."/>
            <person name="Misra M."/>
            <person name="Moseman B.L."/>
            <person name="Mundt M."/>
            <person name="Munk A.C."/>
            <person name="Okinaka R.T."/>
            <person name="Parson-Quintana B."/>
            <person name="Reilly L.P."/>
            <person name="Richardson P."/>
            <person name="Robinson D.L."/>
            <person name="Rubin E."/>
            <person name="Saunders E."/>
            <person name="Tapia R."/>
            <person name="Tesmer J.G."/>
            <person name="Thayer N."/>
            <person name="Thompson L.S."/>
            <person name="Tice H."/>
            <person name="Ticknor L.O."/>
            <person name="Wills P.L."/>
            <person name="Brettin T.S."/>
            <person name="Gilna P."/>
        </authorList>
    </citation>
    <scope>NUCLEOTIDE SEQUENCE [LARGE SCALE GENOMIC DNA]</scope>
    <source>
        <strain>ZK / E33L</strain>
    </source>
</reference>
<comment type="function">
    <text evidence="1">Digests double-stranded RNA. Involved in the processing of primary rRNA transcript to yield the immediate precursors to the large and small rRNAs (23S and 16S). Processes some mRNAs, and tRNAs when they are encoded in the rRNA operon. Processes pre-crRNA and tracrRNA of type II CRISPR loci if present in the organism.</text>
</comment>
<comment type="catalytic activity">
    <reaction evidence="1">
        <text>Endonucleolytic cleavage to 5'-phosphomonoester.</text>
        <dbReference type="EC" id="3.1.26.3"/>
    </reaction>
</comment>
<comment type="cofactor">
    <cofactor evidence="1">
        <name>Mg(2+)</name>
        <dbReference type="ChEBI" id="CHEBI:18420"/>
    </cofactor>
</comment>
<comment type="subunit">
    <text evidence="1">Homodimer.</text>
</comment>
<comment type="subcellular location">
    <subcellularLocation>
        <location evidence="1">Cytoplasm</location>
    </subcellularLocation>
</comment>
<comment type="similarity">
    <text evidence="1">Belongs to the ribonuclease III family.</text>
</comment>
<dbReference type="EC" id="3.1.26.3" evidence="1"/>
<dbReference type="EMBL" id="CP000001">
    <property type="protein sequence ID" value="AAU16653.1"/>
    <property type="molecule type" value="Genomic_DNA"/>
</dbReference>
<dbReference type="RefSeq" id="WP_001146874.1">
    <property type="nucleotide sequence ID" value="NC_006274.1"/>
</dbReference>
<dbReference type="SMR" id="Q636H7"/>
<dbReference type="KEGG" id="bcz:BCE33L3608"/>
<dbReference type="PATRIC" id="fig|288681.22.peg.1803"/>
<dbReference type="Proteomes" id="UP000002612">
    <property type="component" value="Chromosome"/>
</dbReference>
<dbReference type="GO" id="GO:0005737">
    <property type="term" value="C:cytoplasm"/>
    <property type="evidence" value="ECO:0007669"/>
    <property type="project" value="UniProtKB-SubCell"/>
</dbReference>
<dbReference type="GO" id="GO:0003725">
    <property type="term" value="F:double-stranded RNA binding"/>
    <property type="evidence" value="ECO:0007669"/>
    <property type="project" value="TreeGrafter"/>
</dbReference>
<dbReference type="GO" id="GO:0046872">
    <property type="term" value="F:metal ion binding"/>
    <property type="evidence" value="ECO:0007669"/>
    <property type="project" value="UniProtKB-KW"/>
</dbReference>
<dbReference type="GO" id="GO:0004525">
    <property type="term" value="F:ribonuclease III activity"/>
    <property type="evidence" value="ECO:0007669"/>
    <property type="project" value="UniProtKB-UniRule"/>
</dbReference>
<dbReference type="GO" id="GO:0019843">
    <property type="term" value="F:rRNA binding"/>
    <property type="evidence" value="ECO:0007669"/>
    <property type="project" value="UniProtKB-KW"/>
</dbReference>
<dbReference type="GO" id="GO:0006397">
    <property type="term" value="P:mRNA processing"/>
    <property type="evidence" value="ECO:0007669"/>
    <property type="project" value="UniProtKB-UniRule"/>
</dbReference>
<dbReference type="GO" id="GO:0010468">
    <property type="term" value="P:regulation of gene expression"/>
    <property type="evidence" value="ECO:0007669"/>
    <property type="project" value="TreeGrafter"/>
</dbReference>
<dbReference type="GO" id="GO:0006364">
    <property type="term" value="P:rRNA processing"/>
    <property type="evidence" value="ECO:0007669"/>
    <property type="project" value="UniProtKB-UniRule"/>
</dbReference>
<dbReference type="GO" id="GO:0008033">
    <property type="term" value="P:tRNA processing"/>
    <property type="evidence" value="ECO:0007669"/>
    <property type="project" value="UniProtKB-KW"/>
</dbReference>
<dbReference type="CDD" id="cd10845">
    <property type="entry name" value="DSRM_RNAse_III_family"/>
    <property type="match status" value="1"/>
</dbReference>
<dbReference type="CDD" id="cd00593">
    <property type="entry name" value="RIBOc"/>
    <property type="match status" value="1"/>
</dbReference>
<dbReference type="FunFam" id="1.10.1520.10:FF:000001">
    <property type="entry name" value="Ribonuclease 3"/>
    <property type="match status" value="1"/>
</dbReference>
<dbReference type="FunFam" id="3.30.160.20:FF:000003">
    <property type="entry name" value="Ribonuclease 3"/>
    <property type="match status" value="1"/>
</dbReference>
<dbReference type="Gene3D" id="3.30.160.20">
    <property type="match status" value="1"/>
</dbReference>
<dbReference type="Gene3D" id="1.10.1520.10">
    <property type="entry name" value="Ribonuclease III domain"/>
    <property type="match status" value="1"/>
</dbReference>
<dbReference type="HAMAP" id="MF_00104">
    <property type="entry name" value="RNase_III"/>
    <property type="match status" value="1"/>
</dbReference>
<dbReference type="InterPro" id="IPR014720">
    <property type="entry name" value="dsRBD_dom"/>
</dbReference>
<dbReference type="InterPro" id="IPR011907">
    <property type="entry name" value="RNase_III"/>
</dbReference>
<dbReference type="InterPro" id="IPR000999">
    <property type="entry name" value="RNase_III_dom"/>
</dbReference>
<dbReference type="InterPro" id="IPR036389">
    <property type="entry name" value="RNase_III_sf"/>
</dbReference>
<dbReference type="NCBIfam" id="TIGR02191">
    <property type="entry name" value="RNaseIII"/>
    <property type="match status" value="1"/>
</dbReference>
<dbReference type="PANTHER" id="PTHR11207:SF0">
    <property type="entry name" value="RIBONUCLEASE 3"/>
    <property type="match status" value="1"/>
</dbReference>
<dbReference type="PANTHER" id="PTHR11207">
    <property type="entry name" value="RIBONUCLEASE III"/>
    <property type="match status" value="1"/>
</dbReference>
<dbReference type="Pfam" id="PF00035">
    <property type="entry name" value="dsrm"/>
    <property type="match status" value="1"/>
</dbReference>
<dbReference type="Pfam" id="PF14622">
    <property type="entry name" value="Ribonucleas_3_3"/>
    <property type="match status" value="1"/>
</dbReference>
<dbReference type="SMART" id="SM00358">
    <property type="entry name" value="DSRM"/>
    <property type="match status" value="1"/>
</dbReference>
<dbReference type="SMART" id="SM00535">
    <property type="entry name" value="RIBOc"/>
    <property type="match status" value="1"/>
</dbReference>
<dbReference type="SUPFAM" id="SSF54768">
    <property type="entry name" value="dsRNA-binding domain-like"/>
    <property type="match status" value="1"/>
</dbReference>
<dbReference type="SUPFAM" id="SSF69065">
    <property type="entry name" value="RNase III domain-like"/>
    <property type="match status" value="1"/>
</dbReference>
<dbReference type="PROSITE" id="PS50137">
    <property type="entry name" value="DS_RBD"/>
    <property type="match status" value="1"/>
</dbReference>
<dbReference type="PROSITE" id="PS00517">
    <property type="entry name" value="RNASE_3_1"/>
    <property type="match status" value="1"/>
</dbReference>
<dbReference type="PROSITE" id="PS50142">
    <property type="entry name" value="RNASE_3_2"/>
    <property type="match status" value="1"/>
</dbReference>
<name>RNC_BACCZ</name>